<gene>
    <name evidence="1" type="primary">gpsA</name>
    <name type="ordered locus">SPy_0226</name>
    <name type="ordered locus">M5005_Spy0194</name>
    <name type="ORF">M5005_Spy0193</name>
</gene>
<sequence length="338" mass="36681">MTKQKVAILGPGSWGTALSQVLNDNGHDVRLWGNIPDQIEEINTKHTNRHYFKDIVLDKNITATLDLGQALSDVDAVLFVVPTKVTRLVARQVAAILDHKVVVMHASKGLEPETHERLSTILEEEIPAHFRSEVVVVSGPSHAEETIVRDITLITAASKDIEAAKYVQSLFSNHYFRLYTNTDVIGVETAGALKNIIAVGAGALHGLGYGDNAKAAVITRGLAEITRLGVKLGADPLTYSGLSGVGDLIVTGTSVHSRNWRAGAALGRGEKLEDIERNMGMVIEGIATTKVAYEIAQDLGVYMPITTAIYKSIYEGADIKESILGMMSNEFRSENEWH</sequence>
<name>GPDA_STRP1</name>
<dbReference type="EC" id="1.1.1.94" evidence="1"/>
<dbReference type="EMBL" id="AE004092">
    <property type="protein sequence ID" value="AAK33309.1"/>
    <property type="molecule type" value="Genomic_DNA"/>
</dbReference>
<dbReference type="EMBL" id="CP000017">
    <property type="protein sequence ID" value="AAZ50813.2"/>
    <property type="molecule type" value="Genomic_DNA"/>
</dbReference>
<dbReference type="RefSeq" id="NP_268588.1">
    <property type="nucleotide sequence ID" value="NC_002737.2"/>
</dbReference>
<dbReference type="SMR" id="P68887"/>
<dbReference type="PaxDb" id="1314-HKU360_00235"/>
<dbReference type="KEGG" id="spy:SPy_0226"/>
<dbReference type="KEGG" id="spz:M5005_Spy0194"/>
<dbReference type="PATRIC" id="fig|160490.10.peg.200"/>
<dbReference type="HOGENOM" id="CLU_033449_0_2_9"/>
<dbReference type="OMA" id="NRMFGNM"/>
<dbReference type="UniPathway" id="UPA00940"/>
<dbReference type="Proteomes" id="UP000000750">
    <property type="component" value="Chromosome"/>
</dbReference>
<dbReference type="GO" id="GO:0005829">
    <property type="term" value="C:cytosol"/>
    <property type="evidence" value="ECO:0007669"/>
    <property type="project" value="TreeGrafter"/>
</dbReference>
<dbReference type="GO" id="GO:0047952">
    <property type="term" value="F:glycerol-3-phosphate dehydrogenase [NAD(P)+] activity"/>
    <property type="evidence" value="ECO:0007669"/>
    <property type="project" value="UniProtKB-UniRule"/>
</dbReference>
<dbReference type="GO" id="GO:0051287">
    <property type="term" value="F:NAD binding"/>
    <property type="evidence" value="ECO:0007669"/>
    <property type="project" value="InterPro"/>
</dbReference>
<dbReference type="GO" id="GO:0005975">
    <property type="term" value="P:carbohydrate metabolic process"/>
    <property type="evidence" value="ECO:0007669"/>
    <property type="project" value="InterPro"/>
</dbReference>
<dbReference type="GO" id="GO:0046167">
    <property type="term" value="P:glycerol-3-phosphate biosynthetic process"/>
    <property type="evidence" value="ECO:0007669"/>
    <property type="project" value="UniProtKB-UniRule"/>
</dbReference>
<dbReference type="GO" id="GO:0046168">
    <property type="term" value="P:glycerol-3-phosphate catabolic process"/>
    <property type="evidence" value="ECO:0007669"/>
    <property type="project" value="InterPro"/>
</dbReference>
<dbReference type="GO" id="GO:0006650">
    <property type="term" value="P:glycerophospholipid metabolic process"/>
    <property type="evidence" value="ECO:0007669"/>
    <property type="project" value="UniProtKB-UniRule"/>
</dbReference>
<dbReference type="GO" id="GO:0008654">
    <property type="term" value="P:phospholipid biosynthetic process"/>
    <property type="evidence" value="ECO:0007669"/>
    <property type="project" value="UniProtKB-KW"/>
</dbReference>
<dbReference type="FunFam" id="1.10.1040.10:FF:000001">
    <property type="entry name" value="Glycerol-3-phosphate dehydrogenase [NAD(P)+]"/>
    <property type="match status" value="1"/>
</dbReference>
<dbReference type="FunFam" id="3.40.50.720:FF:000019">
    <property type="entry name" value="Glycerol-3-phosphate dehydrogenase [NAD(P)+]"/>
    <property type="match status" value="1"/>
</dbReference>
<dbReference type="Gene3D" id="1.10.1040.10">
    <property type="entry name" value="N-(1-d-carboxylethyl)-l-norvaline Dehydrogenase, domain 2"/>
    <property type="match status" value="1"/>
</dbReference>
<dbReference type="Gene3D" id="3.40.50.720">
    <property type="entry name" value="NAD(P)-binding Rossmann-like Domain"/>
    <property type="match status" value="1"/>
</dbReference>
<dbReference type="HAMAP" id="MF_00394">
    <property type="entry name" value="NAD_Glyc3P_dehydrog"/>
    <property type="match status" value="1"/>
</dbReference>
<dbReference type="InterPro" id="IPR008927">
    <property type="entry name" value="6-PGluconate_DH-like_C_sf"/>
</dbReference>
<dbReference type="InterPro" id="IPR013328">
    <property type="entry name" value="6PGD_dom2"/>
</dbReference>
<dbReference type="InterPro" id="IPR006168">
    <property type="entry name" value="G3P_DH_NAD-dep"/>
</dbReference>
<dbReference type="InterPro" id="IPR006109">
    <property type="entry name" value="G3P_DH_NAD-dep_C"/>
</dbReference>
<dbReference type="InterPro" id="IPR011128">
    <property type="entry name" value="G3P_DH_NAD-dep_N"/>
</dbReference>
<dbReference type="InterPro" id="IPR036291">
    <property type="entry name" value="NAD(P)-bd_dom_sf"/>
</dbReference>
<dbReference type="NCBIfam" id="NF000940">
    <property type="entry name" value="PRK00094.1-2"/>
    <property type="match status" value="1"/>
</dbReference>
<dbReference type="NCBIfam" id="NF000941">
    <property type="entry name" value="PRK00094.1-3"/>
    <property type="match status" value="1"/>
</dbReference>
<dbReference type="NCBIfam" id="NF000942">
    <property type="entry name" value="PRK00094.1-4"/>
    <property type="match status" value="1"/>
</dbReference>
<dbReference type="PANTHER" id="PTHR11728">
    <property type="entry name" value="GLYCEROL-3-PHOSPHATE DEHYDROGENASE"/>
    <property type="match status" value="1"/>
</dbReference>
<dbReference type="PANTHER" id="PTHR11728:SF1">
    <property type="entry name" value="GLYCEROL-3-PHOSPHATE DEHYDROGENASE [NAD(+)] 2, CHLOROPLASTIC"/>
    <property type="match status" value="1"/>
</dbReference>
<dbReference type="Pfam" id="PF07479">
    <property type="entry name" value="NAD_Gly3P_dh_C"/>
    <property type="match status" value="1"/>
</dbReference>
<dbReference type="Pfam" id="PF01210">
    <property type="entry name" value="NAD_Gly3P_dh_N"/>
    <property type="match status" value="1"/>
</dbReference>
<dbReference type="PIRSF" id="PIRSF000114">
    <property type="entry name" value="Glycerol-3-P_dh"/>
    <property type="match status" value="1"/>
</dbReference>
<dbReference type="PRINTS" id="PR00077">
    <property type="entry name" value="GPDHDRGNASE"/>
</dbReference>
<dbReference type="SUPFAM" id="SSF48179">
    <property type="entry name" value="6-phosphogluconate dehydrogenase C-terminal domain-like"/>
    <property type="match status" value="1"/>
</dbReference>
<dbReference type="SUPFAM" id="SSF51735">
    <property type="entry name" value="NAD(P)-binding Rossmann-fold domains"/>
    <property type="match status" value="1"/>
</dbReference>
<dbReference type="PROSITE" id="PS00957">
    <property type="entry name" value="NAD_G3PDH"/>
    <property type="match status" value="1"/>
</dbReference>
<proteinExistence type="inferred from homology"/>
<accession>P68887</accession>
<accession>P58143</accession>
<accession>P82550</accession>
<accession>Q491A5</accession>
<accession>Q491A6</accession>
<organism>
    <name type="scientific">Streptococcus pyogenes serotype M1</name>
    <dbReference type="NCBI Taxonomy" id="301447"/>
    <lineage>
        <taxon>Bacteria</taxon>
        <taxon>Bacillati</taxon>
        <taxon>Bacillota</taxon>
        <taxon>Bacilli</taxon>
        <taxon>Lactobacillales</taxon>
        <taxon>Streptococcaceae</taxon>
        <taxon>Streptococcus</taxon>
    </lineage>
</organism>
<feature type="chain" id="PRO_0000138040" description="Glycerol-3-phosphate dehydrogenase [NAD(P)+]">
    <location>
        <begin position="1"/>
        <end position="338"/>
    </location>
</feature>
<feature type="active site" description="Proton acceptor" evidence="1">
    <location>
        <position position="194"/>
    </location>
</feature>
<feature type="binding site" evidence="1">
    <location>
        <position position="13"/>
    </location>
    <ligand>
        <name>NADPH</name>
        <dbReference type="ChEBI" id="CHEBI:57783"/>
    </ligand>
</feature>
<feature type="binding site" evidence="1">
    <location>
        <position position="14"/>
    </location>
    <ligand>
        <name>NADPH</name>
        <dbReference type="ChEBI" id="CHEBI:57783"/>
    </ligand>
</feature>
<feature type="binding site" evidence="1">
    <location>
        <position position="108"/>
    </location>
    <ligand>
        <name>NADPH</name>
        <dbReference type="ChEBI" id="CHEBI:57783"/>
    </ligand>
</feature>
<feature type="binding site" evidence="1">
    <location>
        <position position="108"/>
    </location>
    <ligand>
        <name>sn-glycerol 3-phosphate</name>
        <dbReference type="ChEBI" id="CHEBI:57597"/>
    </ligand>
</feature>
<feature type="binding site" evidence="1">
    <location>
        <position position="139"/>
    </location>
    <ligand>
        <name>sn-glycerol 3-phosphate</name>
        <dbReference type="ChEBI" id="CHEBI:57597"/>
    </ligand>
</feature>
<feature type="binding site" evidence="1">
    <location>
        <position position="141"/>
    </location>
    <ligand>
        <name>sn-glycerol 3-phosphate</name>
        <dbReference type="ChEBI" id="CHEBI:57597"/>
    </ligand>
</feature>
<feature type="binding site" evidence="1">
    <location>
        <position position="143"/>
    </location>
    <ligand>
        <name>NADPH</name>
        <dbReference type="ChEBI" id="CHEBI:57783"/>
    </ligand>
</feature>
<feature type="binding site" evidence="1">
    <location>
        <position position="194"/>
    </location>
    <ligand>
        <name>sn-glycerol 3-phosphate</name>
        <dbReference type="ChEBI" id="CHEBI:57597"/>
    </ligand>
</feature>
<feature type="binding site" evidence="1">
    <location>
        <position position="247"/>
    </location>
    <ligand>
        <name>sn-glycerol 3-phosphate</name>
        <dbReference type="ChEBI" id="CHEBI:57597"/>
    </ligand>
</feature>
<feature type="binding site" evidence="1">
    <location>
        <position position="257"/>
    </location>
    <ligand>
        <name>sn-glycerol 3-phosphate</name>
        <dbReference type="ChEBI" id="CHEBI:57597"/>
    </ligand>
</feature>
<feature type="binding site" evidence="1">
    <location>
        <position position="258"/>
    </location>
    <ligand>
        <name>NADPH</name>
        <dbReference type="ChEBI" id="CHEBI:57783"/>
    </ligand>
</feature>
<feature type="binding site" evidence="1">
    <location>
        <position position="258"/>
    </location>
    <ligand>
        <name>sn-glycerol 3-phosphate</name>
        <dbReference type="ChEBI" id="CHEBI:57597"/>
    </ligand>
</feature>
<feature type="binding site" evidence="1">
    <location>
        <position position="259"/>
    </location>
    <ligand>
        <name>sn-glycerol 3-phosphate</name>
        <dbReference type="ChEBI" id="CHEBI:57597"/>
    </ligand>
</feature>
<feature type="binding site" evidence="1">
    <location>
        <position position="282"/>
    </location>
    <ligand>
        <name>NADPH</name>
        <dbReference type="ChEBI" id="CHEBI:57783"/>
    </ligand>
</feature>
<feature type="binding site" evidence="1">
    <location>
        <position position="284"/>
    </location>
    <ligand>
        <name>NADPH</name>
        <dbReference type="ChEBI" id="CHEBI:57783"/>
    </ligand>
</feature>
<evidence type="ECO:0000255" key="1">
    <source>
        <dbReference type="HAMAP-Rule" id="MF_00394"/>
    </source>
</evidence>
<protein>
    <recommendedName>
        <fullName evidence="1">Glycerol-3-phosphate dehydrogenase [NAD(P)+]</fullName>
        <ecNumber evidence="1">1.1.1.94</ecNumber>
    </recommendedName>
    <alternativeName>
        <fullName evidence="1">NAD(P)(+)-dependent glycerol-3-phosphate dehydrogenase</fullName>
    </alternativeName>
    <alternativeName>
        <fullName evidence="1">NAD(P)H-dependent dihydroxyacetone-phosphate reductase</fullName>
    </alternativeName>
</protein>
<keyword id="KW-0963">Cytoplasm</keyword>
<keyword id="KW-0444">Lipid biosynthesis</keyword>
<keyword id="KW-0443">Lipid metabolism</keyword>
<keyword id="KW-0520">NAD</keyword>
<keyword id="KW-0521">NADP</keyword>
<keyword id="KW-0547">Nucleotide-binding</keyword>
<keyword id="KW-0560">Oxidoreductase</keyword>
<keyword id="KW-0594">Phospholipid biosynthesis</keyword>
<keyword id="KW-1208">Phospholipid metabolism</keyword>
<keyword id="KW-1185">Reference proteome</keyword>
<reference key="1">
    <citation type="journal article" date="2001" name="Proc. Natl. Acad. Sci. U.S.A.">
        <title>Complete genome sequence of an M1 strain of Streptococcus pyogenes.</title>
        <authorList>
            <person name="Ferretti J.J."/>
            <person name="McShan W.M."/>
            <person name="Ajdic D.J."/>
            <person name="Savic D.J."/>
            <person name="Savic G."/>
            <person name="Lyon K."/>
            <person name="Primeaux C."/>
            <person name="Sezate S."/>
            <person name="Suvorov A.N."/>
            <person name="Kenton S."/>
            <person name="Lai H.S."/>
            <person name="Lin S.P."/>
            <person name="Qian Y."/>
            <person name="Jia H.G."/>
            <person name="Najar F.Z."/>
            <person name="Ren Q."/>
            <person name="Zhu H."/>
            <person name="Song L."/>
            <person name="White J."/>
            <person name="Yuan X."/>
            <person name="Clifton S.W."/>
            <person name="Roe B.A."/>
            <person name="McLaughlin R.E."/>
        </authorList>
    </citation>
    <scope>NUCLEOTIDE SEQUENCE [LARGE SCALE GENOMIC DNA]</scope>
    <source>
        <strain>ATCC 700294 / SF370 / Serotype M1</strain>
    </source>
</reference>
<reference key="2">
    <citation type="journal article" date="2005" name="J. Infect. Dis.">
        <title>Evolutionary origin and emergence of a highly successful clone of serotype M1 group A Streptococcus involved multiple horizontal gene transfer events.</title>
        <authorList>
            <person name="Sumby P."/>
            <person name="Porcella S.F."/>
            <person name="Madrigal A.G."/>
            <person name="Barbian K.D."/>
            <person name="Virtaneva K."/>
            <person name="Ricklefs S.M."/>
            <person name="Sturdevant D.E."/>
            <person name="Graham M.R."/>
            <person name="Vuopio-Varkila J."/>
            <person name="Hoe N.P."/>
            <person name="Musser J.M."/>
        </authorList>
    </citation>
    <scope>NUCLEOTIDE SEQUENCE [LARGE SCALE GENOMIC DNA]</scope>
    <source>
        <strain>ATCC BAA-947 / MGAS5005 / Serotype M1</strain>
    </source>
</reference>
<reference key="3">
    <citation type="submission" date="2014-04" db="EMBL/GenBank/DDBJ databases">
        <authorList>
            <person name="Beres S.B."/>
            <person name="Musser J.M."/>
        </authorList>
    </citation>
    <scope>SEQUENCE REVISION</scope>
</reference>
<comment type="function">
    <text evidence="1">Catalyzes the reduction of the glycolytic intermediate dihydroxyacetone phosphate (DHAP) to sn-glycerol 3-phosphate (G3P), the key precursor for phospholipid synthesis.</text>
</comment>
<comment type="catalytic activity">
    <reaction evidence="1">
        <text>sn-glycerol 3-phosphate + NAD(+) = dihydroxyacetone phosphate + NADH + H(+)</text>
        <dbReference type="Rhea" id="RHEA:11092"/>
        <dbReference type="ChEBI" id="CHEBI:15378"/>
        <dbReference type="ChEBI" id="CHEBI:57540"/>
        <dbReference type="ChEBI" id="CHEBI:57597"/>
        <dbReference type="ChEBI" id="CHEBI:57642"/>
        <dbReference type="ChEBI" id="CHEBI:57945"/>
        <dbReference type="EC" id="1.1.1.94"/>
    </reaction>
    <physiologicalReaction direction="right-to-left" evidence="1">
        <dbReference type="Rhea" id="RHEA:11094"/>
    </physiologicalReaction>
</comment>
<comment type="catalytic activity">
    <reaction evidence="1">
        <text>sn-glycerol 3-phosphate + NADP(+) = dihydroxyacetone phosphate + NADPH + H(+)</text>
        <dbReference type="Rhea" id="RHEA:11096"/>
        <dbReference type="ChEBI" id="CHEBI:15378"/>
        <dbReference type="ChEBI" id="CHEBI:57597"/>
        <dbReference type="ChEBI" id="CHEBI:57642"/>
        <dbReference type="ChEBI" id="CHEBI:57783"/>
        <dbReference type="ChEBI" id="CHEBI:58349"/>
        <dbReference type="EC" id="1.1.1.94"/>
    </reaction>
    <physiologicalReaction direction="right-to-left" evidence="1">
        <dbReference type="Rhea" id="RHEA:11098"/>
    </physiologicalReaction>
</comment>
<comment type="pathway">
    <text evidence="1">Membrane lipid metabolism; glycerophospholipid metabolism.</text>
</comment>
<comment type="subcellular location">
    <subcellularLocation>
        <location evidence="1">Cytoplasm</location>
    </subcellularLocation>
</comment>
<comment type="similarity">
    <text evidence="1">Belongs to the NAD-dependent glycerol-3-phosphate dehydrogenase family.</text>
</comment>